<proteinExistence type="evidence at protein level"/>
<accession>P54849</accession>
<accession>B2R5N1</accession>
<accession>B4DRR1</accession>
<accession>O00681</accession>
<accession>Q13481</accession>
<accession>Q13834</accession>
<dbReference type="EMBL" id="U43916">
    <property type="protein sequence ID" value="AAC51783.1"/>
    <property type="molecule type" value="mRNA"/>
</dbReference>
<dbReference type="EMBL" id="U77085">
    <property type="protein sequence ID" value="AAC51207.1"/>
    <property type="molecule type" value="mRNA"/>
</dbReference>
<dbReference type="EMBL" id="Z50751">
    <property type="protein sequence ID" value="CAA90627.1"/>
    <property type="molecule type" value="mRNA"/>
</dbReference>
<dbReference type="EMBL" id="Y07909">
    <property type="protein sequence ID" value="CAA69217.1"/>
    <property type="molecule type" value="mRNA"/>
</dbReference>
<dbReference type="EMBL" id="AK299388">
    <property type="protein sequence ID" value="BAG61373.1"/>
    <property type="molecule type" value="mRNA"/>
</dbReference>
<dbReference type="EMBL" id="AK312246">
    <property type="protein sequence ID" value="BAG35178.1"/>
    <property type="molecule type" value="mRNA"/>
</dbReference>
<dbReference type="EMBL" id="AC022276">
    <property type="status" value="NOT_ANNOTATED_CDS"/>
    <property type="molecule type" value="Genomic_DNA"/>
</dbReference>
<dbReference type="EMBL" id="AC079628">
    <property type="status" value="NOT_ANNOTATED_CDS"/>
    <property type="molecule type" value="Genomic_DNA"/>
</dbReference>
<dbReference type="EMBL" id="CH471094">
    <property type="protein sequence ID" value="EAW96304.1"/>
    <property type="molecule type" value="Genomic_DNA"/>
</dbReference>
<dbReference type="EMBL" id="BC047300">
    <property type="protein sequence ID" value="AAH47300.1"/>
    <property type="molecule type" value="mRNA"/>
</dbReference>
<dbReference type="CCDS" id="CCDS8660.1">
    <molecule id="P54849-1"/>
</dbReference>
<dbReference type="PIR" id="G02355">
    <property type="entry name" value="G02355"/>
</dbReference>
<dbReference type="RefSeq" id="NP_001414.1">
    <molecule id="P54849-1"/>
    <property type="nucleotide sequence ID" value="NM_001423.3"/>
</dbReference>
<dbReference type="SMR" id="P54849"/>
<dbReference type="BioGRID" id="108327">
    <property type="interactions" value="62"/>
</dbReference>
<dbReference type="FunCoup" id="P54849">
    <property type="interactions" value="888"/>
</dbReference>
<dbReference type="IntAct" id="P54849">
    <property type="interactions" value="61"/>
</dbReference>
<dbReference type="STRING" id="9606.ENSP00000256951"/>
<dbReference type="GlyCosmos" id="P54849">
    <property type="glycosylation" value="2 sites, No reported glycans"/>
</dbReference>
<dbReference type="GlyGen" id="P54849">
    <property type="glycosylation" value="2 sites, 1 N-linked glycan (1 site)"/>
</dbReference>
<dbReference type="PhosphoSitePlus" id="P54849"/>
<dbReference type="BioMuta" id="EMP1"/>
<dbReference type="DMDM" id="3041684"/>
<dbReference type="MassIVE" id="P54849"/>
<dbReference type="PaxDb" id="9606-ENSP00000256951"/>
<dbReference type="PeptideAtlas" id="P54849"/>
<dbReference type="TopDownProteomics" id="P54849-1">
    <molecule id="P54849-1"/>
</dbReference>
<dbReference type="Antibodypedia" id="23604">
    <property type="antibodies" value="106 antibodies from 20 providers"/>
</dbReference>
<dbReference type="DNASU" id="2012"/>
<dbReference type="Ensembl" id="ENST00000256951.10">
    <molecule id="P54849-1"/>
    <property type="protein sequence ID" value="ENSP00000256951.5"/>
    <property type="gene ID" value="ENSG00000134531.10"/>
</dbReference>
<dbReference type="Ensembl" id="ENST00000396301.7">
    <molecule id="P54849-2"/>
    <property type="protein sequence ID" value="ENSP00000379595.3"/>
    <property type="gene ID" value="ENSG00000134531.10"/>
</dbReference>
<dbReference type="GeneID" id="2012"/>
<dbReference type="KEGG" id="hsa:2012"/>
<dbReference type="MANE-Select" id="ENST00000256951.10">
    <property type="protein sequence ID" value="ENSP00000256951.5"/>
    <property type="RefSeq nucleotide sequence ID" value="NM_001423.3"/>
    <property type="RefSeq protein sequence ID" value="NP_001414.1"/>
</dbReference>
<dbReference type="UCSC" id="uc001rbr.4">
    <molecule id="P54849-1"/>
    <property type="organism name" value="human"/>
</dbReference>
<dbReference type="AGR" id="HGNC:3333"/>
<dbReference type="CTD" id="2012"/>
<dbReference type="DisGeNET" id="2012"/>
<dbReference type="GeneCards" id="EMP1"/>
<dbReference type="HGNC" id="HGNC:3333">
    <property type="gene designation" value="EMP1"/>
</dbReference>
<dbReference type="HPA" id="ENSG00000134531">
    <property type="expression patterns" value="Tissue enhanced (esophagus, vagina)"/>
</dbReference>
<dbReference type="MIM" id="602333">
    <property type="type" value="gene"/>
</dbReference>
<dbReference type="neXtProt" id="NX_P54849"/>
<dbReference type="OpenTargets" id="ENSG00000134531"/>
<dbReference type="PharmGKB" id="PA27770"/>
<dbReference type="VEuPathDB" id="HostDB:ENSG00000134531"/>
<dbReference type="eggNOG" id="ENOG502S028">
    <property type="taxonomic scope" value="Eukaryota"/>
</dbReference>
<dbReference type="GeneTree" id="ENSGT00950000182696"/>
<dbReference type="HOGENOM" id="CLU_138632_0_1_1"/>
<dbReference type="InParanoid" id="P54849"/>
<dbReference type="OMA" id="CWMCILI"/>
<dbReference type="OrthoDB" id="8678517at2759"/>
<dbReference type="PAN-GO" id="P54849">
    <property type="GO annotations" value="1 GO annotation based on evolutionary models"/>
</dbReference>
<dbReference type="PhylomeDB" id="P54849"/>
<dbReference type="TreeFam" id="TF330414"/>
<dbReference type="PathwayCommons" id="P54849"/>
<dbReference type="SignaLink" id="P54849"/>
<dbReference type="BioGRID-ORCS" id="2012">
    <property type="hits" value="20 hits in 1157 CRISPR screens"/>
</dbReference>
<dbReference type="ChiTaRS" id="EMP1">
    <property type="organism name" value="human"/>
</dbReference>
<dbReference type="GeneWiki" id="EMP1"/>
<dbReference type="GenomeRNAi" id="2012"/>
<dbReference type="Pharos" id="P54849">
    <property type="development level" value="Tbio"/>
</dbReference>
<dbReference type="PRO" id="PR:P54849"/>
<dbReference type="Proteomes" id="UP000005640">
    <property type="component" value="Chromosome 12"/>
</dbReference>
<dbReference type="RNAct" id="P54849">
    <property type="molecule type" value="protein"/>
</dbReference>
<dbReference type="Bgee" id="ENSG00000134531">
    <property type="expression patterns" value="Expressed in lower esophagus mucosa and 199 other cell types or tissues"/>
</dbReference>
<dbReference type="ExpressionAtlas" id="P54849">
    <property type="expression patterns" value="baseline and differential"/>
</dbReference>
<dbReference type="GO" id="GO:0016020">
    <property type="term" value="C:membrane"/>
    <property type="evidence" value="ECO:0000304"/>
    <property type="project" value="ProtInc"/>
</dbReference>
<dbReference type="GO" id="GO:0005886">
    <property type="term" value="C:plasma membrane"/>
    <property type="evidence" value="ECO:0000314"/>
    <property type="project" value="UniProtKB"/>
</dbReference>
<dbReference type="GO" id="GO:0006915">
    <property type="term" value="P:apoptotic process"/>
    <property type="evidence" value="ECO:0000314"/>
    <property type="project" value="UniProtKB"/>
</dbReference>
<dbReference type="GO" id="GO:0032060">
    <property type="term" value="P:bleb assembly"/>
    <property type="evidence" value="ECO:0000314"/>
    <property type="project" value="UniProtKB"/>
</dbReference>
<dbReference type="GO" id="GO:0008544">
    <property type="term" value="P:epidermis development"/>
    <property type="evidence" value="ECO:0000304"/>
    <property type="project" value="ProtInc"/>
</dbReference>
<dbReference type="FunFam" id="1.20.140.150:FF:000026">
    <property type="entry name" value="Epithelial membrane protein 1"/>
    <property type="match status" value="1"/>
</dbReference>
<dbReference type="Gene3D" id="1.20.140.150">
    <property type="match status" value="1"/>
</dbReference>
<dbReference type="InterPro" id="IPR003932">
    <property type="entry name" value="EMP_1"/>
</dbReference>
<dbReference type="InterPro" id="IPR050579">
    <property type="entry name" value="PMP-22/EMP/MP20-like"/>
</dbReference>
<dbReference type="InterPro" id="IPR004031">
    <property type="entry name" value="PMP22/EMP/MP20/Claudin"/>
</dbReference>
<dbReference type="InterPro" id="IPR004032">
    <property type="entry name" value="PMP22_EMP_MP20"/>
</dbReference>
<dbReference type="PANTHER" id="PTHR10671:SF6">
    <property type="entry name" value="EPITHELIAL MEMBRANE PROTEIN 1"/>
    <property type="match status" value="1"/>
</dbReference>
<dbReference type="PANTHER" id="PTHR10671">
    <property type="entry name" value="EPITHELIAL MEMBRANE PROTEIN-RELATED"/>
    <property type="match status" value="1"/>
</dbReference>
<dbReference type="Pfam" id="PF00822">
    <property type="entry name" value="PMP22_Claudin"/>
    <property type="match status" value="1"/>
</dbReference>
<dbReference type="PRINTS" id="PR01453">
    <property type="entry name" value="EPMEMFAMILY"/>
</dbReference>
<dbReference type="PRINTS" id="PR01454">
    <property type="entry name" value="EPMEMPROT1"/>
</dbReference>
<dbReference type="PROSITE" id="PS01221">
    <property type="entry name" value="PMP22_1"/>
    <property type="match status" value="1"/>
</dbReference>
<dbReference type="PROSITE" id="PS01222">
    <property type="entry name" value="PMP22_2"/>
    <property type="match status" value="1"/>
</dbReference>
<keyword id="KW-0025">Alternative splicing</keyword>
<keyword id="KW-0325">Glycoprotein</keyword>
<keyword id="KW-0472">Membrane</keyword>
<keyword id="KW-1267">Proteomics identification</keyword>
<keyword id="KW-1185">Reference proteome</keyword>
<keyword id="KW-0812">Transmembrane</keyword>
<keyword id="KW-1133">Transmembrane helix</keyword>
<organism>
    <name type="scientific">Homo sapiens</name>
    <name type="common">Human</name>
    <dbReference type="NCBI Taxonomy" id="9606"/>
    <lineage>
        <taxon>Eukaryota</taxon>
        <taxon>Metazoa</taxon>
        <taxon>Chordata</taxon>
        <taxon>Craniata</taxon>
        <taxon>Vertebrata</taxon>
        <taxon>Euteleostomi</taxon>
        <taxon>Mammalia</taxon>
        <taxon>Eutheria</taxon>
        <taxon>Euarchontoglires</taxon>
        <taxon>Primates</taxon>
        <taxon>Haplorrhini</taxon>
        <taxon>Catarrhini</taxon>
        <taxon>Hominidae</taxon>
        <taxon>Homo</taxon>
    </lineage>
</organism>
<evidence type="ECO:0000255" key="1"/>
<evidence type="ECO:0000303" key="2">
    <source>
    </source>
</evidence>
<evidence type="ECO:0000305" key="3"/>
<name>EMP1_HUMAN</name>
<protein>
    <recommendedName>
        <fullName>Epithelial membrane protein 1</fullName>
        <shortName>EMP-1</shortName>
    </recommendedName>
    <alternativeName>
        <fullName>CL-20</fullName>
    </alternativeName>
    <alternativeName>
        <fullName>Protein B4B</fullName>
    </alternativeName>
    <alternativeName>
        <fullName>Tumor-associated membrane protein</fullName>
    </alternativeName>
</protein>
<sequence length="157" mass="17563">MLVLLAGIFVVHIATVIMLFVSTIANVWLVSNTVDASVGLWKNCTNISCSDSLSYASEDALKTVQAFMILSIIFCVIALLVFVFQLFTMEKGNRFFLSGATTLVCWLCILVGVSIYTSHYANRDGTQYHHGYSYILGWICFCFSFIIGVLYLVLRKK</sequence>
<gene>
    <name type="primary">EMP1</name>
    <name type="synonym">B4B</name>
    <name type="synonym">TMP</name>
</gene>
<comment type="interaction">
    <interactant intactId="EBI-4319440">
        <id>P54849</id>
    </interactant>
    <interactant intactId="EBI-941819">
        <id>P16157-17</id>
        <label>ANK1</label>
    </interactant>
    <organismsDiffer>false</organismsDiffer>
    <experiments>3</experiments>
</comment>
<comment type="interaction">
    <interactant intactId="EBI-4319440">
        <id>P54849</id>
    </interactant>
    <interactant intactId="EBI-7054139">
        <id>Q68DC2</id>
        <label>ANKS6</label>
    </interactant>
    <organismsDiffer>false</organismsDiffer>
    <experiments>3</experiments>
</comment>
<comment type="interaction">
    <interactant intactId="EBI-4319440">
        <id>P54849</id>
    </interactant>
    <interactant intactId="EBI-4290634">
        <id>Q9BQE5</id>
        <label>APOL2</label>
    </interactant>
    <organismsDiffer>false</organismsDiffer>
    <experiments>3</experiments>
</comment>
<comment type="interaction">
    <interactant intactId="EBI-4319440">
        <id>P54849</id>
    </interactant>
    <interactant intactId="EBI-13059134">
        <id>Q13520</id>
        <label>AQP6</label>
    </interactant>
    <organismsDiffer>false</organismsDiffer>
    <experiments>3</experiments>
</comment>
<comment type="interaction">
    <interactant intactId="EBI-4319440">
        <id>P54849</id>
    </interactant>
    <interactant intactId="EBI-11343438">
        <id>Q3SXY8</id>
        <label>ARL13B</label>
    </interactant>
    <organismsDiffer>false</organismsDiffer>
    <experiments>3</experiments>
</comment>
<comment type="interaction">
    <interactant intactId="EBI-4319440">
        <id>P54849</id>
    </interactant>
    <interactant intactId="EBI-714543">
        <id>Q15041</id>
        <label>ARL6IP1</label>
    </interactant>
    <organismsDiffer>false</organismsDiffer>
    <experiments>3</experiments>
</comment>
<comment type="interaction">
    <interactant intactId="EBI-4319440">
        <id>P54849</id>
    </interactant>
    <interactant intactId="EBI-12808270">
        <id>P07307-3</id>
        <label>ASGR2</label>
    </interactant>
    <organismsDiffer>false</organismsDiffer>
    <experiments>3</experiments>
</comment>
<comment type="interaction">
    <interactant intactId="EBI-4319440">
        <id>P54849</id>
    </interactant>
    <interactant intactId="EBI-3904417">
        <id>Q99437</id>
        <label>ATP6V0B</label>
    </interactant>
    <organismsDiffer>false</organismsDiffer>
    <experiments>3</experiments>
</comment>
<comment type="interaction">
    <interactant intactId="EBI-4319440">
        <id>P54849</id>
    </interactant>
    <interactant intactId="EBI-12935759">
        <id>O15342</id>
        <label>ATP6V0E1</label>
    </interactant>
    <organismsDiffer>false</organismsDiffer>
    <experiments>3</experiments>
</comment>
<comment type="interaction">
    <interactant intactId="EBI-4319440">
        <id>P54849</id>
    </interactant>
    <interactant intactId="EBI-8648738">
        <id>Q8WVV5</id>
        <label>BTN2A2</label>
    </interactant>
    <organismsDiffer>false</organismsDiffer>
    <experiments>3</experiments>
</comment>
<comment type="interaction">
    <interactant intactId="EBI-4319440">
        <id>P54849</id>
    </interactant>
    <interactant intactId="EBI-489374">
        <id>P51681</id>
        <label>CCR5</label>
    </interactant>
    <organismsDiffer>false</organismsDiffer>
    <experiments>3</experiments>
</comment>
<comment type="interaction">
    <interactant intactId="EBI-4319440">
        <id>P54849</id>
    </interactant>
    <interactant intactId="EBI-6139068">
        <id>P11049</id>
        <label>CD37</label>
    </interactant>
    <organismsDiffer>false</organismsDiffer>
    <experiments>3</experiments>
</comment>
<comment type="interaction">
    <interactant intactId="EBI-4319440">
        <id>P54849</id>
    </interactant>
    <interactant intactId="EBI-3862428">
        <id>P09693</id>
        <label>CD3G</label>
    </interactant>
    <organismsDiffer>false</organismsDiffer>
    <experiments>3</experiments>
</comment>
<comment type="interaction">
    <interactant intactId="EBI-4319440">
        <id>P54849</id>
    </interactant>
    <interactant intactId="EBI-6657396">
        <id>P19397</id>
        <label>CD53</label>
    </interactant>
    <organismsDiffer>false</organismsDiffer>
    <experiments>3</experiments>
</comment>
<comment type="interaction">
    <interactant intactId="EBI-4319440">
        <id>P54849</id>
    </interactant>
    <interactant intactId="EBI-7797864">
        <id>P11912</id>
        <label>CD79A</label>
    </interactant>
    <organismsDiffer>false</organismsDiffer>
    <experiments>3</experiments>
</comment>
<comment type="interaction">
    <interactant intactId="EBI-4319440">
        <id>P54849</id>
    </interactant>
    <interactant intactId="EBI-739624">
        <id>Q8NHQ1</id>
        <label>CEP70</label>
    </interactant>
    <organismsDiffer>false</organismsDiffer>
    <experiments>3</experiments>
</comment>
<comment type="interaction">
    <interactant intactId="EBI-4319440">
        <id>P54849</id>
    </interactant>
    <interactant intactId="EBI-18341636">
        <id>O95484</id>
        <label>CLDN9</label>
    </interactant>
    <organismsDiffer>false</organismsDiffer>
    <experiments>3</experiments>
</comment>
<comment type="interaction">
    <interactant intactId="EBI-4319440">
        <id>P54849</id>
    </interactant>
    <interactant intactId="EBI-17876114">
        <id>Q9Y5Q5</id>
        <label>CORIN</label>
    </interactant>
    <organismsDiffer>false</organismsDiffer>
    <experiments>3</experiments>
</comment>
<comment type="interaction">
    <interactant intactId="EBI-4319440">
        <id>P54849</id>
    </interactant>
    <interactant intactId="EBI-2835281">
        <id>P25025</id>
        <label>CXCR2</label>
    </interactant>
    <organismsDiffer>false</organismsDiffer>
    <experiments>3</experiments>
</comment>
<comment type="interaction">
    <interactant intactId="EBI-4319440">
        <id>P54849</id>
    </interactant>
    <interactant intactId="EBI-3915253">
        <id>Q15125</id>
        <label>EBP</label>
    </interactant>
    <organismsDiffer>false</organismsDiffer>
    <experiments>3</experiments>
</comment>
<comment type="interaction">
    <interactant intactId="EBI-4319440">
        <id>P54849</id>
    </interactant>
    <interactant intactId="EBI-529425">
        <id>Q92838</id>
        <label>EDA</label>
    </interactant>
    <organismsDiffer>false</organismsDiffer>
    <experiments>3</experiments>
</comment>
<comment type="interaction">
    <interactant intactId="EBI-4319440">
        <id>P54849</id>
    </interactant>
    <interactant intactId="EBI-2339219">
        <id>Q08426</id>
        <label>EHHADH</label>
    </interactant>
    <organismsDiffer>false</organismsDiffer>
    <experiments>3</experiments>
</comment>
<comment type="interaction">
    <interactant intactId="EBI-4319440">
        <id>P54849</id>
    </interactant>
    <interactant intactId="EBI-781551">
        <id>Q9Y282</id>
        <label>ERGIC3</label>
    </interactant>
    <organismsDiffer>false</organismsDiffer>
    <experiments>3</experiments>
</comment>
<comment type="interaction">
    <interactant intactId="EBI-4319440">
        <id>P54849</id>
    </interactant>
    <interactant intactId="EBI-2833872">
        <id>O15552</id>
        <label>FFAR2</label>
    </interactant>
    <organismsDiffer>false</organismsDiffer>
    <experiments>3</experiments>
</comment>
<comment type="interaction">
    <interactant intactId="EBI-4319440">
        <id>P54849</id>
    </interactant>
    <interactant intactId="EBI-6166686">
        <id>Q96F15</id>
        <label>GIMAP5</label>
    </interactant>
    <organismsDiffer>false</organismsDiffer>
    <experiments>3</experiments>
</comment>
<comment type="interaction">
    <interactant intactId="EBI-4319440">
        <id>P54849</id>
    </interactant>
    <interactant intactId="EBI-18076404">
        <id>O15529</id>
        <label>GPR42</label>
    </interactant>
    <organismsDiffer>false</organismsDiffer>
    <experiments>3</experiments>
</comment>
<comment type="interaction">
    <interactant intactId="EBI-4319440">
        <id>P54849</id>
    </interactant>
    <interactant intactId="EBI-13067820">
        <id>Q9NZD1</id>
        <label>GPRC5D</label>
    </interactant>
    <organismsDiffer>false</organismsDiffer>
    <experiments>3</experiments>
</comment>
<comment type="interaction">
    <interactant intactId="EBI-4319440">
        <id>P54849</id>
    </interactant>
    <interactant intactId="EBI-994141">
        <id>P28335</id>
        <label>HTR2C</label>
    </interactant>
    <organismsDiffer>false</organismsDiffer>
    <experiments>3</experiments>
</comment>
<comment type="interaction">
    <interactant intactId="EBI-4319440">
        <id>P54849</id>
    </interactant>
    <interactant intactId="EBI-1266923">
        <id>Q6UXK2</id>
        <label>ISLR2</label>
    </interactant>
    <organismsDiffer>false</organismsDiffer>
    <experiments>3</experiments>
</comment>
<comment type="interaction">
    <interactant intactId="EBI-4319440">
        <id>P54849</id>
    </interactant>
    <interactant intactId="EBI-465137">
        <id>Q9HDC5</id>
        <label>JPH1</label>
    </interactant>
    <organismsDiffer>false</organismsDiffer>
    <experiments>3</experiments>
</comment>
<comment type="interaction">
    <interactant intactId="EBI-4319440">
        <id>P54849</id>
    </interactant>
    <interactant intactId="EBI-9018187">
        <id>P26715</id>
        <label>KLRC1</label>
    </interactant>
    <organismsDiffer>false</organismsDiffer>
    <experiments>3</experiments>
</comment>
<comment type="interaction">
    <interactant intactId="EBI-4319440">
        <id>P54849</id>
    </interactant>
    <interactant intactId="EBI-3267258">
        <id>Q86VI4</id>
        <label>LAPTM4B</label>
    </interactant>
    <organismsDiffer>false</organismsDiffer>
    <experiments>3</experiments>
</comment>
<comment type="interaction">
    <interactant intactId="EBI-4319440">
        <id>P54849</id>
    </interactant>
    <interactant intactId="EBI-750776">
        <id>O95214</id>
        <label>LEPROTL1</label>
    </interactant>
    <organismsDiffer>false</organismsDiffer>
    <experiments>3</experiments>
</comment>
<comment type="interaction">
    <interactant intactId="EBI-4319440">
        <id>P54849</id>
    </interactant>
    <interactant intactId="EBI-2820517">
        <id>Q8TAF8</id>
        <label>LHFPL5</label>
    </interactant>
    <organismsDiffer>false</organismsDiffer>
    <experiments>3</experiments>
</comment>
<comment type="interaction">
    <interactant intactId="EBI-4319440">
        <id>P54849</id>
    </interactant>
    <interactant intactId="EBI-2876949">
        <id>P43657</id>
        <label>LPAR6</label>
    </interactant>
    <organismsDiffer>false</organismsDiffer>
    <experiments>3</experiments>
</comment>
<comment type="interaction">
    <interactant intactId="EBI-4319440">
        <id>P54849</id>
    </interactant>
    <interactant intactId="EBI-17775622">
        <id>Q96PB8</id>
        <label>LRRC3B</label>
    </interactant>
    <organismsDiffer>false</organismsDiffer>
    <experiments>3</experiments>
</comment>
<comment type="interaction">
    <interactant intactId="EBI-4319440">
        <id>P54849</id>
    </interactant>
    <interactant intactId="EBI-10264855">
        <id>Q8N112</id>
        <label>LSMEM2</label>
    </interactant>
    <organismsDiffer>false</organismsDiffer>
    <experiments>6</experiments>
</comment>
<comment type="interaction">
    <interactant intactId="EBI-4319440">
        <id>P54849</id>
    </interactant>
    <interactant intactId="EBI-3932027">
        <id>P21145</id>
        <label>MAL</label>
    </interactant>
    <organismsDiffer>false</organismsDiffer>
    <experiments>3</experiments>
</comment>
<comment type="interaction">
    <interactant intactId="EBI-4319440">
        <id>P54849</id>
    </interactant>
    <interactant intactId="EBI-750078">
        <id>Q13021</id>
        <label>MALL</label>
    </interactant>
    <organismsDiffer>false</organismsDiffer>
    <experiments>3</experiments>
</comment>
<comment type="interaction">
    <interactant intactId="EBI-4319440">
        <id>P54849</id>
    </interactant>
    <interactant intactId="EBI-721391">
        <id>Q9GZW8</id>
        <label>MS4A7</label>
    </interactant>
    <organismsDiffer>false</organismsDiffer>
    <experiments>3</experiments>
</comment>
<comment type="interaction">
    <interactant intactId="EBI-4319440">
        <id>P54849</id>
    </interactant>
    <interactant intactId="EBI-12807478">
        <id>P35372-10</id>
        <label>OPRM1</label>
    </interactant>
    <organismsDiffer>false</organismsDiffer>
    <experiments>3</experiments>
</comment>
<comment type="interaction">
    <interactant intactId="EBI-4319440">
        <id>P54849</id>
    </interactant>
    <interactant intactId="EBI-373552">
        <id>Q96CS7</id>
        <label>PLEKHB2</label>
    </interactant>
    <organismsDiffer>false</organismsDiffer>
    <experiments>3</experiments>
</comment>
<comment type="interaction">
    <interactant intactId="EBI-4319440">
        <id>P54849</id>
    </interactant>
    <interactant intactId="EBI-2845982">
        <id>Q01453</id>
        <label>PMP22</label>
    </interactant>
    <organismsDiffer>false</organismsDiffer>
    <experiments>3</experiments>
</comment>
<comment type="interaction">
    <interactant intactId="EBI-4319440">
        <id>P54849</id>
    </interactant>
    <interactant intactId="EBI-712367">
        <id>Q9UI14</id>
        <label>RABAC1</label>
    </interactant>
    <organismsDiffer>false</organismsDiffer>
    <experiments>3</experiments>
</comment>
<comment type="interaction">
    <interactant intactId="EBI-4319440">
        <id>P54849</id>
    </interactant>
    <interactant intactId="EBI-1052363">
        <id>Q9NS64</id>
        <label>RPRM</label>
    </interactant>
    <organismsDiffer>false</organismsDiffer>
    <experiments>3</experiments>
</comment>
<comment type="interaction">
    <interactant intactId="EBI-4319440">
        <id>P54849</id>
    </interactant>
    <interactant intactId="EBI-17284533">
        <id>A2A2V5</id>
        <label>SERTM1</label>
    </interactant>
    <organismsDiffer>false</organismsDiffer>
    <experiments>3</experiments>
</comment>
<comment type="interaction">
    <interactant intactId="EBI-4319440">
        <id>P54849</id>
    </interactant>
    <interactant intactId="EBI-741850">
        <id>Q9BZL3</id>
        <label>SMIM3</label>
    </interactant>
    <organismsDiffer>false</organismsDiffer>
    <experiments>6</experiments>
</comment>
<comment type="interaction">
    <interactant intactId="EBI-4319440">
        <id>P54849</id>
    </interactant>
    <interactant intactId="EBI-17498703">
        <id>Q9HBV2</id>
        <label>SPACA1</label>
    </interactant>
    <organismsDiffer>false</organismsDiffer>
    <experiments>3</experiments>
</comment>
<comment type="interaction">
    <interactant intactId="EBI-4319440">
        <id>P54849</id>
    </interactant>
    <interactant intactId="EBI-1211440">
        <id>P27105</id>
        <label>STOM</label>
    </interactant>
    <organismsDiffer>false</organismsDiffer>
    <experiments>3</experiments>
</comment>
<comment type="interaction">
    <interactant intactId="EBI-4319440">
        <id>P54849</id>
    </interactant>
    <interactant intactId="EBI-7131783">
        <id>Q8N205</id>
        <label>SYNE4</label>
    </interactant>
    <organismsDiffer>false</organismsDiffer>
    <experiments>3</experiments>
</comment>
<comment type="interaction">
    <interactant intactId="EBI-4319440">
        <id>P54849</id>
    </interactant>
    <interactant intactId="EBI-18271435">
        <id>Q0VAB0</id>
        <label>TBXA2R</label>
    </interactant>
    <organismsDiffer>false</organismsDiffer>
    <experiments>3</experiments>
</comment>
<comment type="interaction">
    <interactant intactId="EBI-4319440">
        <id>P54849</id>
    </interactant>
    <interactant intactId="EBI-10329860">
        <id>Q9Y6I9</id>
        <label>TEX264</label>
    </interactant>
    <organismsDiffer>false</organismsDiffer>
    <experiments>3</experiments>
</comment>
<comment type="interaction">
    <interactant intactId="EBI-4319440">
        <id>P54849</id>
    </interactant>
    <interactant intactId="EBI-12947623">
        <id>Q96MV1</id>
        <label>TLCD4</label>
    </interactant>
    <organismsDiffer>false</organismsDiffer>
    <experiments>3</experiments>
</comment>
<comment type="interaction">
    <interactant intactId="EBI-4319440">
        <id>P54849</id>
    </interactant>
    <interactant intactId="EBI-19132172">
        <id>B3SHH9</id>
        <label>TMEM114</label>
    </interactant>
    <organismsDiffer>false</organismsDiffer>
    <experiments>3</experiments>
</comment>
<comment type="interaction">
    <interactant intactId="EBI-4319440">
        <id>P54849</id>
    </interactant>
    <interactant intactId="EBI-2514588">
        <id>Q9NX00</id>
        <label>TMEM160</label>
    </interactant>
    <organismsDiffer>false</organismsDiffer>
    <experiments>3</experiments>
</comment>
<comment type="interaction">
    <interactant intactId="EBI-4319440">
        <id>P54849</id>
    </interactant>
    <interactant intactId="EBI-10173151">
        <id>A2RU14</id>
        <label>TMEM218</label>
    </interactant>
    <organismsDiffer>false</organismsDiffer>
    <experiments>3</experiments>
</comment>
<comment type="interaction">
    <interactant intactId="EBI-4319440">
        <id>P54849</id>
    </interactant>
    <interactant intactId="EBI-11528917">
        <id>Q8WW34-2</id>
        <label>TMEM239</label>
    </interactant>
    <organismsDiffer>false</organismsDiffer>
    <experiments>3</experiments>
</comment>
<comment type="interaction">
    <interactant intactId="EBI-4319440">
        <id>P54849</id>
    </interactant>
    <interactant intactId="EBI-17180389">
        <id>E9PQX1</id>
        <label>TMEM262</label>
    </interactant>
    <organismsDiffer>false</organismsDiffer>
    <experiments>3</experiments>
</comment>
<comment type="interaction">
    <interactant intactId="EBI-4319440">
        <id>P54849</id>
    </interactant>
    <interactant intactId="EBI-723976">
        <id>Q9P0T7</id>
        <label>TMEM9</label>
    </interactant>
    <organismsDiffer>false</organismsDiffer>
    <experiments>3</experiments>
</comment>
<comment type="interaction">
    <interactant intactId="EBI-4319440">
        <id>P54849</id>
    </interactant>
    <interactant intactId="EBI-12195249">
        <id>Q5TGU0</id>
        <label>TSPO2</label>
    </interactant>
    <organismsDiffer>false</organismsDiffer>
    <experiments>3</experiments>
</comment>
<comment type="subcellular location">
    <subcellularLocation>
        <location>Membrane</location>
        <topology>Multi-pass membrane protein</topology>
    </subcellularLocation>
</comment>
<comment type="alternative products">
    <event type="alternative splicing"/>
    <isoform>
        <id>P54849-1</id>
        <name>1</name>
        <sequence type="displayed"/>
    </isoform>
    <isoform>
        <id>P54849-2</id>
        <name>2</name>
        <sequence type="described" ref="VSP_056984"/>
    </isoform>
</comment>
<comment type="similarity">
    <text evidence="3">Belongs to the PMP-22/EMP/MP20 family.</text>
</comment>
<feature type="chain" id="PRO_0000164653" description="Epithelial membrane protein 1">
    <location>
        <begin position="1"/>
        <end position="157"/>
    </location>
</feature>
<feature type="transmembrane region" description="Helical" evidence="1">
    <location>
        <begin position="1"/>
        <end position="21"/>
    </location>
</feature>
<feature type="transmembrane region" description="Helical" evidence="1">
    <location>
        <begin position="67"/>
        <end position="87"/>
    </location>
</feature>
<feature type="transmembrane region" description="Helical" evidence="1">
    <location>
        <begin position="95"/>
        <end position="115"/>
    </location>
</feature>
<feature type="transmembrane region" description="Helical" evidence="1">
    <location>
        <begin position="134"/>
        <end position="154"/>
    </location>
</feature>
<feature type="glycosylation site" description="N-linked (GlcNAc...) asparagine" evidence="1">
    <location>
        <position position="43"/>
    </location>
</feature>
<feature type="glycosylation site" description="N-linked (GlcNAc...) asparagine" evidence="1">
    <location>
        <position position="46"/>
    </location>
</feature>
<feature type="splice variant" id="VSP_056984" description="In isoform 2." evidence="2">
    <original>WLCILVGVSIYTSHYANRDGTQYHHGYSYILGWICFCFSFIIGVLYLVLRKK</original>
    <variation>FIMRIVMERSITTAIPTSWAGSASASASSSAFSIWS</variation>
    <location>
        <begin position="106"/>
        <end position="157"/>
    </location>
</feature>
<feature type="sequence variant" id="VAR_050608" description="In dbSNP:rs34412222.">
    <original>S</original>
    <variation>N</variation>
    <location>
        <position position="57"/>
    </location>
</feature>
<reference key="1">
    <citation type="journal article" date="1996" name="Gene">
        <title>Characterization of a tumor-associated gene, a member of a novel family of genes encoding membrane glycoproteins.</title>
        <authorList>
            <person name="Ben-Porath I."/>
            <person name="Benvenisty N."/>
        </authorList>
    </citation>
    <scope>NUCLEOTIDE SEQUENCE [MRNA] (ISOFORM 1)</scope>
    <source>
        <tissue>Fetal kidney</tissue>
    </source>
</reference>
<reference key="2">
    <citation type="submission" date="1997-10" db="EMBL/GenBank/DDBJ databases">
        <authorList>
            <person name="Ben-Porath I."/>
            <person name="Benvenisty N."/>
        </authorList>
    </citation>
    <scope>SEQUENCE REVISION TO 83</scope>
</reference>
<reference key="3">
    <citation type="journal article" date="1997" name="Genomics">
        <title>cDNA cloning, genomic structure, and chromosome mapping of the human epithelial membrane protein CL-20 gene (EMP1), a member of the PMP22 family.</title>
        <authorList>
            <person name="Chen Y."/>
            <person name="Medvedev A."/>
            <person name="Ruzanov P."/>
            <person name="Marvin K.W."/>
            <person name="Jetten A.M."/>
        </authorList>
    </citation>
    <scope>NUCLEOTIDE SEQUENCE [MRNA] (ISOFORM 1)</scope>
</reference>
<reference key="4">
    <citation type="journal article" date="1996" name="J. Immunol.">
        <title>B4B, a novel growth-arrest gene, is expressed by a subset of progenitor/pre-B lymphocytes negative for cytoplasmic mu-chain.</title>
        <authorList>
            <person name="Ruegg C.L."/>
            <person name="Wu H."/>
            <person name="Fagnoni F.F."/>
            <person name="Engleman E.G."/>
            <person name="Laus R."/>
        </authorList>
    </citation>
    <scope>NUCLEOTIDE SEQUENCE [MRNA] (ISOFORM 1)</scope>
    <source>
        <tissue>Blood</tissue>
    </source>
</reference>
<reference key="5">
    <citation type="journal article" date="1997" name="Anticancer Res.">
        <title>Differential gene expression in human mammary carcinoma cells: identification of a new member of a receptor family.</title>
        <authorList>
            <person name="Schiemann S."/>
            <person name="Rueckels M."/>
            <person name="Engelholm L.H."/>
            <person name="Schwirzke M."/>
            <person name="Bruenner N."/>
            <person name="Weidle U.H."/>
        </authorList>
    </citation>
    <scope>NUCLEOTIDE SEQUENCE [MRNA] (ISOFORM 1)</scope>
</reference>
<reference key="6">
    <citation type="journal article" date="2004" name="Nat. Genet.">
        <title>Complete sequencing and characterization of 21,243 full-length human cDNAs.</title>
        <authorList>
            <person name="Ota T."/>
            <person name="Suzuki Y."/>
            <person name="Nishikawa T."/>
            <person name="Otsuki T."/>
            <person name="Sugiyama T."/>
            <person name="Irie R."/>
            <person name="Wakamatsu A."/>
            <person name="Hayashi K."/>
            <person name="Sato H."/>
            <person name="Nagai K."/>
            <person name="Kimura K."/>
            <person name="Makita H."/>
            <person name="Sekine M."/>
            <person name="Obayashi M."/>
            <person name="Nishi T."/>
            <person name="Shibahara T."/>
            <person name="Tanaka T."/>
            <person name="Ishii S."/>
            <person name="Yamamoto J."/>
            <person name="Saito K."/>
            <person name="Kawai Y."/>
            <person name="Isono Y."/>
            <person name="Nakamura Y."/>
            <person name="Nagahari K."/>
            <person name="Murakami K."/>
            <person name="Yasuda T."/>
            <person name="Iwayanagi T."/>
            <person name="Wagatsuma M."/>
            <person name="Shiratori A."/>
            <person name="Sudo H."/>
            <person name="Hosoiri T."/>
            <person name="Kaku Y."/>
            <person name="Kodaira H."/>
            <person name="Kondo H."/>
            <person name="Sugawara M."/>
            <person name="Takahashi M."/>
            <person name="Kanda K."/>
            <person name="Yokoi T."/>
            <person name="Furuya T."/>
            <person name="Kikkawa E."/>
            <person name="Omura Y."/>
            <person name="Abe K."/>
            <person name="Kamihara K."/>
            <person name="Katsuta N."/>
            <person name="Sato K."/>
            <person name="Tanikawa M."/>
            <person name="Yamazaki M."/>
            <person name="Ninomiya K."/>
            <person name="Ishibashi T."/>
            <person name="Yamashita H."/>
            <person name="Murakawa K."/>
            <person name="Fujimori K."/>
            <person name="Tanai H."/>
            <person name="Kimata M."/>
            <person name="Watanabe M."/>
            <person name="Hiraoka S."/>
            <person name="Chiba Y."/>
            <person name="Ishida S."/>
            <person name="Ono Y."/>
            <person name="Takiguchi S."/>
            <person name="Watanabe S."/>
            <person name="Yosida M."/>
            <person name="Hotuta T."/>
            <person name="Kusano J."/>
            <person name="Kanehori K."/>
            <person name="Takahashi-Fujii A."/>
            <person name="Hara H."/>
            <person name="Tanase T.-O."/>
            <person name="Nomura Y."/>
            <person name="Togiya S."/>
            <person name="Komai F."/>
            <person name="Hara R."/>
            <person name="Takeuchi K."/>
            <person name="Arita M."/>
            <person name="Imose N."/>
            <person name="Musashino K."/>
            <person name="Yuuki H."/>
            <person name="Oshima A."/>
            <person name="Sasaki N."/>
            <person name="Aotsuka S."/>
            <person name="Yoshikawa Y."/>
            <person name="Matsunawa H."/>
            <person name="Ichihara T."/>
            <person name="Shiohata N."/>
            <person name="Sano S."/>
            <person name="Moriya S."/>
            <person name="Momiyama H."/>
            <person name="Satoh N."/>
            <person name="Takami S."/>
            <person name="Terashima Y."/>
            <person name="Suzuki O."/>
            <person name="Nakagawa S."/>
            <person name="Senoh A."/>
            <person name="Mizoguchi H."/>
            <person name="Goto Y."/>
            <person name="Shimizu F."/>
            <person name="Wakebe H."/>
            <person name="Hishigaki H."/>
            <person name="Watanabe T."/>
            <person name="Sugiyama A."/>
            <person name="Takemoto M."/>
            <person name="Kawakami B."/>
            <person name="Yamazaki M."/>
            <person name="Watanabe K."/>
            <person name="Kumagai A."/>
            <person name="Itakura S."/>
            <person name="Fukuzumi Y."/>
            <person name="Fujimori Y."/>
            <person name="Komiyama M."/>
            <person name="Tashiro H."/>
            <person name="Tanigami A."/>
            <person name="Fujiwara T."/>
            <person name="Ono T."/>
            <person name="Yamada K."/>
            <person name="Fujii Y."/>
            <person name="Ozaki K."/>
            <person name="Hirao M."/>
            <person name="Ohmori Y."/>
            <person name="Kawabata A."/>
            <person name="Hikiji T."/>
            <person name="Kobatake N."/>
            <person name="Inagaki H."/>
            <person name="Ikema Y."/>
            <person name="Okamoto S."/>
            <person name="Okitani R."/>
            <person name="Kawakami T."/>
            <person name="Noguchi S."/>
            <person name="Itoh T."/>
            <person name="Shigeta K."/>
            <person name="Senba T."/>
            <person name="Matsumura K."/>
            <person name="Nakajima Y."/>
            <person name="Mizuno T."/>
            <person name="Morinaga M."/>
            <person name="Sasaki M."/>
            <person name="Togashi T."/>
            <person name="Oyama M."/>
            <person name="Hata H."/>
            <person name="Watanabe M."/>
            <person name="Komatsu T."/>
            <person name="Mizushima-Sugano J."/>
            <person name="Satoh T."/>
            <person name="Shirai Y."/>
            <person name="Takahashi Y."/>
            <person name="Nakagawa K."/>
            <person name="Okumura K."/>
            <person name="Nagase T."/>
            <person name="Nomura N."/>
            <person name="Kikuchi H."/>
            <person name="Masuho Y."/>
            <person name="Yamashita R."/>
            <person name="Nakai K."/>
            <person name="Yada T."/>
            <person name="Nakamura Y."/>
            <person name="Ohara O."/>
            <person name="Isogai T."/>
            <person name="Sugano S."/>
        </authorList>
    </citation>
    <scope>NUCLEOTIDE SEQUENCE [LARGE SCALE MRNA] (ISOFORMS 1 AND 2)</scope>
    <source>
        <tissue>Tongue</tissue>
    </source>
</reference>
<reference key="7">
    <citation type="journal article" date="2006" name="Nature">
        <title>The finished DNA sequence of human chromosome 12.</title>
        <authorList>
            <person name="Scherer S.E."/>
            <person name="Muzny D.M."/>
            <person name="Buhay C.J."/>
            <person name="Chen R."/>
            <person name="Cree A."/>
            <person name="Ding Y."/>
            <person name="Dugan-Rocha S."/>
            <person name="Gill R."/>
            <person name="Gunaratne P."/>
            <person name="Harris R.A."/>
            <person name="Hawes A.C."/>
            <person name="Hernandez J."/>
            <person name="Hodgson A.V."/>
            <person name="Hume J."/>
            <person name="Jackson A."/>
            <person name="Khan Z.M."/>
            <person name="Kovar-Smith C."/>
            <person name="Lewis L.R."/>
            <person name="Lozado R.J."/>
            <person name="Metzker M.L."/>
            <person name="Milosavljevic A."/>
            <person name="Miner G.R."/>
            <person name="Montgomery K.T."/>
            <person name="Morgan M.B."/>
            <person name="Nazareth L.V."/>
            <person name="Scott G."/>
            <person name="Sodergren E."/>
            <person name="Song X.-Z."/>
            <person name="Steffen D."/>
            <person name="Lovering R.C."/>
            <person name="Wheeler D.A."/>
            <person name="Worley K.C."/>
            <person name="Yuan Y."/>
            <person name="Zhang Z."/>
            <person name="Adams C.Q."/>
            <person name="Ansari-Lari M.A."/>
            <person name="Ayele M."/>
            <person name="Brown M.J."/>
            <person name="Chen G."/>
            <person name="Chen Z."/>
            <person name="Clerc-Blankenburg K.P."/>
            <person name="Davis C."/>
            <person name="Delgado O."/>
            <person name="Dinh H.H."/>
            <person name="Draper H."/>
            <person name="Gonzalez-Garay M.L."/>
            <person name="Havlak P."/>
            <person name="Jackson L.R."/>
            <person name="Jacob L.S."/>
            <person name="Kelly S.H."/>
            <person name="Li L."/>
            <person name="Li Z."/>
            <person name="Liu J."/>
            <person name="Liu W."/>
            <person name="Lu J."/>
            <person name="Maheshwari M."/>
            <person name="Nguyen B.-V."/>
            <person name="Okwuonu G.O."/>
            <person name="Pasternak S."/>
            <person name="Perez L.M."/>
            <person name="Plopper F.J.H."/>
            <person name="Santibanez J."/>
            <person name="Shen H."/>
            <person name="Tabor P.E."/>
            <person name="Verduzco D."/>
            <person name="Waldron L."/>
            <person name="Wang Q."/>
            <person name="Williams G.A."/>
            <person name="Zhang J."/>
            <person name="Zhou J."/>
            <person name="Allen C.C."/>
            <person name="Amin A.G."/>
            <person name="Anyalebechi V."/>
            <person name="Bailey M."/>
            <person name="Barbaria J.A."/>
            <person name="Bimage K.E."/>
            <person name="Bryant N.P."/>
            <person name="Burch P.E."/>
            <person name="Burkett C.E."/>
            <person name="Burrell K.L."/>
            <person name="Calderon E."/>
            <person name="Cardenas V."/>
            <person name="Carter K."/>
            <person name="Casias K."/>
            <person name="Cavazos I."/>
            <person name="Cavazos S.R."/>
            <person name="Ceasar H."/>
            <person name="Chacko J."/>
            <person name="Chan S.N."/>
            <person name="Chavez D."/>
            <person name="Christopoulos C."/>
            <person name="Chu J."/>
            <person name="Cockrell R."/>
            <person name="Cox C.D."/>
            <person name="Dang M."/>
            <person name="Dathorne S.R."/>
            <person name="David R."/>
            <person name="Davis C.M."/>
            <person name="Davy-Carroll L."/>
            <person name="Deshazo D.R."/>
            <person name="Donlin J.E."/>
            <person name="D'Souza L."/>
            <person name="Eaves K.A."/>
            <person name="Egan A."/>
            <person name="Emery-Cohen A.J."/>
            <person name="Escotto M."/>
            <person name="Flagg N."/>
            <person name="Forbes L.D."/>
            <person name="Gabisi A.M."/>
            <person name="Garza M."/>
            <person name="Hamilton C."/>
            <person name="Henderson N."/>
            <person name="Hernandez O."/>
            <person name="Hines S."/>
            <person name="Hogues M.E."/>
            <person name="Huang M."/>
            <person name="Idlebird D.G."/>
            <person name="Johnson R."/>
            <person name="Jolivet A."/>
            <person name="Jones S."/>
            <person name="Kagan R."/>
            <person name="King L.M."/>
            <person name="Leal B."/>
            <person name="Lebow H."/>
            <person name="Lee S."/>
            <person name="LeVan J.M."/>
            <person name="Lewis L.C."/>
            <person name="London P."/>
            <person name="Lorensuhewa L.M."/>
            <person name="Loulseged H."/>
            <person name="Lovett D.A."/>
            <person name="Lucier A."/>
            <person name="Lucier R.L."/>
            <person name="Ma J."/>
            <person name="Madu R.C."/>
            <person name="Mapua P."/>
            <person name="Martindale A.D."/>
            <person name="Martinez E."/>
            <person name="Massey E."/>
            <person name="Mawhiney S."/>
            <person name="Meador M.G."/>
            <person name="Mendez S."/>
            <person name="Mercado C."/>
            <person name="Mercado I.C."/>
            <person name="Merritt C.E."/>
            <person name="Miner Z.L."/>
            <person name="Minja E."/>
            <person name="Mitchell T."/>
            <person name="Mohabbat F."/>
            <person name="Mohabbat K."/>
            <person name="Montgomery B."/>
            <person name="Moore N."/>
            <person name="Morris S."/>
            <person name="Munidasa M."/>
            <person name="Ngo R.N."/>
            <person name="Nguyen N.B."/>
            <person name="Nickerson E."/>
            <person name="Nwaokelemeh O.O."/>
            <person name="Nwokenkwo S."/>
            <person name="Obregon M."/>
            <person name="Oguh M."/>
            <person name="Oragunye N."/>
            <person name="Oviedo R.J."/>
            <person name="Parish B.J."/>
            <person name="Parker D.N."/>
            <person name="Parrish J."/>
            <person name="Parks K.L."/>
            <person name="Paul H.A."/>
            <person name="Payton B.A."/>
            <person name="Perez A."/>
            <person name="Perrin W."/>
            <person name="Pickens A."/>
            <person name="Primus E.L."/>
            <person name="Pu L.-L."/>
            <person name="Puazo M."/>
            <person name="Quiles M.M."/>
            <person name="Quiroz J.B."/>
            <person name="Rabata D."/>
            <person name="Reeves K."/>
            <person name="Ruiz S.J."/>
            <person name="Shao H."/>
            <person name="Sisson I."/>
            <person name="Sonaike T."/>
            <person name="Sorelle R.P."/>
            <person name="Sutton A.E."/>
            <person name="Svatek A.F."/>
            <person name="Svetz L.A."/>
            <person name="Tamerisa K.S."/>
            <person name="Taylor T.R."/>
            <person name="Teague B."/>
            <person name="Thomas N."/>
            <person name="Thorn R.D."/>
            <person name="Trejos Z.Y."/>
            <person name="Trevino B.K."/>
            <person name="Ukegbu O.N."/>
            <person name="Urban J.B."/>
            <person name="Vasquez L.I."/>
            <person name="Vera V.A."/>
            <person name="Villasana D.M."/>
            <person name="Wang L."/>
            <person name="Ward-Moore S."/>
            <person name="Warren J.T."/>
            <person name="Wei X."/>
            <person name="White F."/>
            <person name="Williamson A.L."/>
            <person name="Wleczyk R."/>
            <person name="Wooden H.S."/>
            <person name="Wooden S.H."/>
            <person name="Yen J."/>
            <person name="Yoon L."/>
            <person name="Yoon V."/>
            <person name="Zorrilla S.E."/>
            <person name="Nelson D."/>
            <person name="Kucherlapati R."/>
            <person name="Weinstock G."/>
            <person name="Gibbs R.A."/>
        </authorList>
    </citation>
    <scope>NUCLEOTIDE SEQUENCE [LARGE SCALE GENOMIC DNA]</scope>
</reference>
<reference key="8">
    <citation type="submission" date="2005-07" db="EMBL/GenBank/DDBJ databases">
        <authorList>
            <person name="Mural R.J."/>
            <person name="Istrail S."/>
            <person name="Sutton G.G."/>
            <person name="Florea L."/>
            <person name="Halpern A.L."/>
            <person name="Mobarry C.M."/>
            <person name="Lippert R."/>
            <person name="Walenz B."/>
            <person name="Shatkay H."/>
            <person name="Dew I."/>
            <person name="Miller J.R."/>
            <person name="Flanigan M.J."/>
            <person name="Edwards N.J."/>
            <person name="Bolanos R."/>
            <person name="Fasulo D."/>
            <person name="Halldorsson B.V."/>
            <person name="Hannenhalli S."/>
            <person name="Turner R."/>
            <person name="Yooseph S."/>
            <person name="Lu F."/>
            <person name="Nusskern D.R."/>
            <person name="Shue B.C."/>
            <person name="Zheng X.H."/>
            <person name="Zhong F."/>
            <person name="Delcher A.L."/>
            <person name="Huson D.H."/>
            <person name="Kravitz S.A."/>
            <person name="Mouchard L."/>
            <person name="Reinert K."/>
            <person name="Remington K.A."/>
            <person name="Clark A.G."/>
            <person name="Waterman M.S."/>
            <person name="Eichler E.E."/>
            <person name="Adams M.D."/>
            <person name="Hunkapiller M.W."/>
            <person name="Myers E.W."/>
            <person name="Venter J.C."/>
        </authorList>
    </citation>
    <scope>NUCLEOTIDE SEQUENCE [LARGE SCALE GENOMIC DNA]</scope>
</reference>
<reference key="9">
    <citation type="journal article" date="2004" name="Genome Res.">
        <title>The status, quality, and expansion of the NIH full-length cDNA project: the Mammalian Gene Collection (MGC).</title>
        <authorList>
            <consortium name="The MGC Project Team"/>
        </authorList>
    </citation>
    <scope>NUCLEOTIDE SEQUENCE [LARGE SCALE MRNA] (ISOFORM 1)</scope>
    <source>
        <tissue>Liver</tissue>
    </source>
</reference>